<proteinExistence type="inferred from homology"/>
<evidence type="ECO:0000255" key="1">
    <source>
        <dbReference type="HAMAP-Rule" id="MF_00387"/>
    </source>
</evidence>
<protein>
    <recommendedName>
        <fullName evidence="1">Acyl-[acyl-carrier-protein]--UDP-N-acetylglucosamine O-acyltransferase</fullName>
        <shortName evidence="1">UDP-N-acetylglucosamine acyltransferase</shortName>
        <ecNumber evidence="1">2.3.1.129</ecNumber>
    </recommendedName>
</protein>
<gene>
    <name evidence="1" type="primary">lpxA</name>
    <name type="ordered locus">ECH74115_0191</name>
</gene>
<reference key="1">
    <citation type="journal article" date="2011" name="Proc. Natl. Acad. Sci. U.S.A.">
        <title>Genomic anatomy of Escherichia coli O157:H7 outbreaks.</title>
        <authorList>
            <person name="Eppinger M."/>
            <person name="Mammel M.K."/>
            <person name="Leclerc J.E."/>
            <person name="Ravel J."/>
            <person name="Cebula T.A."/>
        </authorList>
    </citation>
    <scope>NUCLEOTIDE SEQUENCE [LARGE SCALE GENOMIC DNA]</scope>
    <source>
        <strain>EC4115 / EHEC</strain>
    </source>
</reference>
<comment type="function">
    <text evidence="1">Involved in the biosynthesis of lipid A, a phosphorylated glycolipid that anchors the lipopolysaccharide to the outer membrane of the cell.</text>
</comment>
<comment type="catalytic activity">
    <reaction evidence="1">
        <text>a (3R)-hydroxyacyl-[ACP] + UDP-N-acetyl-alpha-D-glucosamine = a UDP-3-O-[(3R)-3-hydroxyacyl]-N-acetyl-alpha-D-glucosamine + holo-[ACP]</text>
        <dbReference type="Rhea" id="RHEA:67812"/>
        <dbReference type="Rhea" id="RHEA-COMP:9685"/>
        <dbReference type="Rhea" id="RHEA-COMP:9945"/>
        <dbReference type="ChEBI" id="CHEBI:57705"/>
        <dbReference type="ChEBI" id="CHEBI:64479"/>
        <dbReference type="ChEBI" id="CHEBI:78827"/>
        <dbReference type="ChEBI" id="CHEBI:173225"/>
        <dbReference type="EC" id="2.3.1.129"/>
    </reaction>
</comment>
<comment type="pathway">
    <text evidence="1">Glycolipid biosynthesis; lipid IV(A) biosynthesis; lipid IV(A) from (3R)-3-hydroxytetradecanoyl-[acyl-carrier-protein] and UDP-N-acetyl-alpha-D-glucosamine: step 1/6.</text>
</comment>
<comment type="subunit">
    <text evidence="1">Homotrimer.</text>
</comment>
<comment type="subcellular location">
    <subcellularLocation>
        <location evidence="1">Cytoplasm</location>
    </subcellularLocation>
</comment>
<comment type="similarity">
    <text evidence="1">Belongs to the transferase hexapeptide repeat family. LpxA subfamily.</text>
</comment>
<organism>
    <name type="scientific">Escherichia coli O157:H7 (strain EC4115 / EHEC)</name>
    <dbReference type="NCBI Taxonomy" id="444450"/>
    <lineage>
        <taxon>Bacteria</taxon>
        <taxon>Pseudomonadati</taxon>
        <taxon>Pseudomonadota</taxon>
        <taxon>Gammaproteobacteria</taxon>
        <taxon>Enterobacterales</taxon>
        <taxon>Enterobacteriaceae</taxon>
        <taxon>Escherichia</taxon>
    </lineage>
</organism>
<accession>B5Z0G0</accession>
<dbReference type="EC" id="2.3.1.129" evidence="1"/>
<dbReference type="EMBL" id="CP001164">
    <property type="protein sequence ID" value="ACI35367.1"/>
    <property type="molecule type" value="Genomic_DNA"/>
</dbReference>
<dbReference type="RefSeq" id="WP_000565963.1">
    <property type="nucleotide sequence ID" value="NC_011353.1"/>
</dbReference>
<dbReference type="SMR" id="B5Z0G0"/>
<dbReference type="KEGG" id="ecf:ECH74115_0191"/>
<dbReference type="HOGENOM" id="CLU_061249_0_0_6"/>
<dbReference type="UniPathway" id="UPA00359">
    <property type="reaction ID" value="UER00477"/>
</dbReference>
<dbReference type="GO" id="GO:0005737">
    <property type="term" value="C:cytoplasm"/>
    <property type="evidence" value="ECO:0007669"/>
    <property type="project" value="UniProtKB-SubCell"/>
</dbReference>
<dbReference type="GO" id="GO:0016020">
    <property type="term" value="C:membrane"/>
    <property type="evidence" value="ECO:0007669"/>
    <property type="project" value="GOC"/>
</dbReference>
<dbReference type="GO" id="GO:0008780">
    <property type="term" value="F:acyl-[acyl-carrier-protein]-UDP-N-acetylglucosamine O-acyltransferase activity"/>
    <property type="evidence" value="ECO:0007669"/>
    <property type="project" value="UniProtKB-UniRule"/>
</dbReference>
<dbReference type="GO" id="GO:0009245">
    <property type="term" value="P:lipid A biosynthetic process"/>
    <property type="evidence" value="ECO:0007669"/>
    <property type="project" value="UniProtKB-UniRule"/>
</dbReference>
<dbReference type="CDD" id="cd03351">
    <property type="entry name" value="LbH_UDP-GlcNAc_AT"/>
    <property type="match status" value="1"/>
</dbReference>
<dbReference type="FunFam" id="1.20.1180.10:FF:000001">
    <property type="entry name" value="Acyl-[acyl-carrier-protein]--UDP-N-acetylglucosamine O-acyltransferase"/>
    <property type="match status" value="1"/>
</dbReference>
<dbReference type="FunFam" id="2.160.10.10:FF:000003">
    <property type="entry name" value="Acyl-[acyl-carrier-protein]--UDP-N-acetylglucosamine O-acyltransferase"/>
    <property type="match status" value="1"/>
</dbReference>
<dbReference type="Gene3D" id="2.160.10.10">
    <property type="entry name" value="Hexapeptide repeat proteins"/>
    <property type="match status" value="1"/>
</dbReference>
<dbReference type="Gene3D" id="1.20.1180.10">
    <property type="entry name" value="Udp N-acetylglucosamine O-acyltransferase, C-terminal domain"/>
    <property type="match status" value="1"/>
</dbReference>
<dbReference type="HAMAP" id="MF_00387">
    <property type="entry name" value="LpxA"/>
    <property type="match status" value="1"/>
</dbReference>
<dbReference type="InterPro" id="IPR029098">
    <property type="entry name" value="Acetyltransf_C"/>
</dbReference>
<dbReference type="InterPro" id="IPR037157">
    <property type="entry name" value="Acetyltransf_C_sf"/>
</dbReference>
<dbReference type="InterPro" id="IPR001451">
    <property type="entry name" value="Hexapep"/>
</dbReference>
<dbReference type="InterPro" id="IPR018357">
    <property type="entry name" value="Hexapep_transf_CS"/>
</dbReference>
<dbReference type="InterPro" id="IPR010137">
    <property type="entry name" value="Lipid_A_LpxA"/>
</dbReference>
<dbReference type="InterPro" id="IPR011004">
    <property type="entry name" value="Trimer_LpxA-like_sf"/>
</dbReference>
<dbReference type="NCBIfam" id="TIGR01852">
    <property type="entry name" value="lipid_A_lpxA"/>
    <property type="match status" value="1"/>
</dbReference>
<dbReference type="NCBIfam" id="NF003657">
    <property type="entry name" value="PRK05289.1"/>
    <property type="match status" value="1"/>
</dbReference>
<dbReference type="PANTHER" id="PTHR43480">
    <property type="entry name" value="ACYL-[ACYL-CARRIER-PROTEIN]--UDP-N-ACETYLGLUCOSAMINE O-ACYLTRANSFERASE"/>
    <property type="match status" value="1"/>
</dbReference>
<dbReference type="PANTHER" id="PTHR43480:SF1">
    <property type="entry name" value="ACYL-[ACYL-CARRIER-PROTEIN]--UDP-N-ACETYLGLUCOSAMINE O-ACYLTRANSFERASE, MITOCHONDRIAL-RELATED"/>
    <property type="match status" value="1"/>
</dbReference>
<dbReference type="Pfam" id="PF13720">
    <property type="entry name" value="Acetyltransf_11"/>
    <property type="match status" value="1"/>
</dbReference>
<dbReference type="Pfam" id="PF00132">
    <property type="entry name" value="Hexapep"/>
    <property type="match status" value="2"/>
</dbReference>
<dbReference type="PIRSF" id="PIRSF000456">
    <property type="entry name" value="UDP-GlcNAc_acltr"/>
    <property type="match status" value="1"/>
</dbReference>
<dbReference type="SUPFAM" id="SSF51161">
    <property type="entry name" value="Trimeric LpxA-like enzymes"/>
    <property type="match status" value="1"/>
</dbReference>
<dbReference type="PROSITE" id="PS00101">
    <property type="entry name" value="HEXAPEP_TRANSFERASES"/>
    <property type="match status" value="2"/>
</dbReference>
<sequence length="262" mass="28050">MIDKSAFVHPTAIVEEGASIGANAHIGPFCIVGPHVEIGEGTVLKSHVVVNGHTKIGRDNEIYQFASIGEVNQDLKYAGEPTRVEIGDRNRIRESVTIHRGTVQGGGLTKVGSDNLLMINAHIAHDCTVGNRCILANNATLAGHVSVDDFAIIGGMAAVHQFCIIGAHVMVGGCSGVAQDVPPYVIAQGNHATPFGVNIEGLKRRGFSREAITAIRNAYKLIYRSGKTLDEVKPEIAELAETYPEVKAFTDFFARSTRGLIR</sequence>
<name>LPXA_ECO5E</name>
<keyword id="KW-0012">Acyltransferase</keyword>
<keyword id="KW-0963">Cytoplasm</keyword>
<keyword id="KW-0441">Lipid A biosynthesis</keyword>
<keyword id="KW-0444">Lipid biosynthesis</keyword>
<keyword id="KW-0443">Lipid metabolism</keyword>
<keyword id="KW-0677">Repeat</keyword>
<keyword id="KW-0808">Transferase</keyword>
<feature type="chain" id="PRO_1000122701" description="Acyl-[acyl-carrier-protein]--UDP-N-acetylglucosamine O-acyltransferase">
    <location>
        <begin position="1"/>
        <end position="262"/>
    </location>
</feature>